<protein>
    <recommendedName>
        <fullName>Kelch-like protein 26</fullName>
    </recommendedName>
</protein>
<gene>
    <name type="primary">klhl26</name>
    <name type="ORF">si:ch211-255d18.7</name>
</gene>
<proteinExistence type="inferred from homology"/>
<keyword id="KW-0880">Kelch repeat</keyword>
<keyword id="KW-1185">Reference proteome</keyword>
<keyword id="KW-0677">Repeat</keyword>
<evidence type="ECO:0000250" key="1">
    <source>
        <dbReference type="UniProtKB" id="Q53HC5"/>
    </source>
</evidence>
<evidence type="ECO:0000255" key="2">
    <source>
        <dbReference type="PROSITE-ProRule" id="PRU00037"/>
    </source>
</evidence>
<accession>Q5RGB8</accession>
<name>KLH26_DANRE</name>
<sequence>MAESDGVEFFANRAQSSMADNKNSVLRCTFSAPSHSSTLLRGLSALRDQGQLLDVVLAIDNERFEVHKAVLASCSDYFRAMFTGGMKESNQNTIELIGLSARGLKHIIDFAYSSEVTLDLDCIQDVLGAAVFLQMVPVVELCEEFLKSAMSVETCLNIGQMATTFSLSSLKQSVDAYTFRHFLQIAQEDDFLHIPMERLTFFLQSNKLKNCSEIDLFHAAIRWLQHDASRRTVASEVLCHVRFPLMRSSELVDSVQIVDIMVEDVQCRHFLLEAFNYQILPFRQHEMQSPRTSIRSDITSLITFGGTPYTDNDRTVSSKVYFLPDITVRQFKELTEMEMGCSHACVSVLDNFVYVVGGQHLQYRSGEGAVDICFRYDPHLNQWLRIQPMQESRIQFQLNVLDGQLYATGGRNRSGSLSSVECYCPKKNEWTNVDSLKRRIWGHAGATCGDKLYISGGYGVSVEDKKTLHCYDSALDQWDFKCPMNEPRVLHAMISANNRIYALGGRMDHVDRCFDVLAVEYYIPETDQWTTVSPMRAGQSEAGCCLLDKKIYIVGGYNWHLNNVTSIVQVYNTETDEWERDLHFPESFAGIACTPIILPQTTTQR</sequence>
<dbReference type="EMBL" id="BX936438">
    <property type="protein sequence ID" value="CAI11912.1"/>
    <property type="molecule type" value="Genomic_DNA"/>
</dbReference>
<dbReference type="RefSeq" id="XP_009304087.1">
    <property type="nucleotide sequence ID" value="XM_009305812.2"/>
</dbReference>
<dbReference type="RefSeq" id="XP_068080283.1">
    <property type="nucleotide sequence ID" value="XM_068224182.1"/>
</dbReference>
<dbReference type="SMR" id="Q5RGB8"/>
<dbReference type="FunCoup" id="Q5RGB8">
    <property type="interactions" value="364"/>
</dbReference>
<dbReference type="STRING" id="7955.ENSDARP00000070477"/>
<dbReference type="PaxDb" id="7955-ENSDARP00000070477"/>
<dbReference type="Ensembl" id="ENSDART00000075998">
    <property type="protein sequence ID" value="ENSDARP00000070477"/>
    <property type="gene ID" value="ENSDARG00000053876"/>
</dbReference>
<dbReference type="Ensembl" id="ENSDART00000144181">
    <property type="protein sequence ID" value="ENSDARP00000115562"/>
    <property type="gene ID" value="ENSDARG00000053876"/>
</dbReference>
<dbReference type="GeneID" id="558035"/>
<dbReference type="AGR" id="ZFIN:ZDB-GENE-030131-5975"/>
<dbReference type="ZFIN" id="ZDB-GENE-030131-5975">
    <property type="gene designation" value="klhl26"/>
</dbReference>
<dbReference type="eggNOG" id="KOG4441">
    <property type="taxonomic scope" value="Eukaryota"/>
</dbReference>
<dbReference type="HOGENOM" id="CLU_004253_14_3_1"/>
<dbReference type="InParanoid" id="Q5RGB8"/>
<dbReference type="OMA" id="INREAFH"/>
<dbReference type="PhylomeDB" id="Q5RGB8"/>
<dbReference type="TreeFam" id="TF328485"/>
<dbReference type="PRO" id="PR:Q5RGB8"/>
<dbReference type="Proteomes" id="UP000000437">
    <property type="component" value="Chromosome 11"/>
</dbReference>
<dbReference type="Bgee" id="ENSDARG00000053876">
    <property type="expression patterns" value="Expressed in testis and 23 other cell types or tissues"/>
</dbReference>
<dbReference type="ExpressionAtlas" id="Q5RGB8">
    <property type="expression patterns" value="baseline"/>
</dbReference>
<dbReference type="CDD" id="cd18465">
    <property type="entry name" value="BACK_KLHL26"/>
    <property type="match status" value="1"/>
</dbReference>
<dbReference type="CDD" id="cd18255">
    <property type="entry name" value="BTB_POZ_KLHL26"/>
    <property type="match status" value="1"/>
</dbReference>
<dbReference type="Gene3D" id="1.25.40.420">
    <property type="match status" value="1"/>
</dbReference>
<dbReference type="Gene3D" id="2.120.10.80">
    <property type="entry name" value="Kelch-type beta propeller"/>
    <property type="match status" value="1"/>
</dbReference>
<dbReference type="Gene3D" id="3.30.710.10">
    <property type="entry name" value="Potassium Channel Kv1.1, Chain A"/>
    <property type="match status" value="1"/>
</dbReference>
<dbReference type="InterPro" id="IPR011705">
    <property type="entry name" value="BACK"/>
</dbReference>
<dbReference type="InterPro" id="IPR017096">
    <property type="entry name" value="BTB-kelch_protein"/>
</dbReference>
<dbReference type="InterPro" id="IPR000210">
    <property type="entry name" value="BTB/POZ_dom"/>
</dbReference>
<dbReference type="InterPro" id="IPR030588">
    <property type="entry name" value="BTB_POZ_KLHL26"/>
</dbReference>
<dbReference type="InterPro" id="IPR015915">
    <property type="entry name" value="Kelch-typ_b-propeller"/>
</dbReference>
<dbReference type="InterPro" id="IPR006652">
    <property type="entry name" value="Kelch_1"/>
</dbReference>
<dbReference type="InterPro" id="IPR011333">
    <property type="entry name" value="SKP1/BTB/POZ_sf"/>
</dbReference>
<dbReference type="PANTHER" id="PTHR45632:SF13">
    <property type="entry name" value="KELCH-LIKE PROTEIN 26"/>
    <property type="match status" value="1"/>
</dbReference>
<dbReference type="PANTHER" id="PTHR45632">
    <property type="entry name" value="LD33804P"/>
    <property type="match status" value="1"/>
</dbReference>
<dbReference type="Pfam" id="PF07707">
    <property type="entry name" value="BACK"/>
    <property type="match status" value="1"/>
</dbReference>
<dbReference type="Pfam" id="PF00651">
    <property type="entry name" value="BTB"/>
    <property type="match status" value="1"/>
</dbReference>
<dbReference type="Pfam" id="PF01344">
    <property type="entry name" value="Kelch_1"/>
    <property type="match status" value="1"/>
</dbReference>
<dbReference type="Pfam" id="PF13964">
    <property type="entry name" value="Kelch_6"/>
    <property type="match status" value="1"/>
</dbReference>
<dbReference type="Pfam" id="PF24681">
    <property type="entry name" value="Kelch_KLHDC2_KLHL20_DRC7"/>
    <property type="match status" value="1"/>
</dbReference>
<dbReference type="PIRSF" id="PIRSF037037">
    <property type="entry name" value="Kelch-like_protein_gigaxonin"/>
    <property type="match status" value="1"/>
</dbReference>
<dbReference type="SMART" id="SM00875">
    <property type="entry name" value="BACK"/>
    <property type="match status" value="1"/>
</dbReference>
<dbReference type="SMART" id="SM00225">
    <property type="entry name" value="BTB"/>
    <property type="match status" value="1"/>
</dbReference>
<dbReference type="SMART" id="SM00612">
    <property type="entry name" value="Kelch"/>
    <property type="match status" value="6"/>
</dbReference>
<dbReference type="SUPFAM" id="SSF117281">
    <property type="entry name" value="Kelch motif"/>
    <property type="match status" value="1"/>
</dbReference>
<dbReference type="SUPFAM" id="SSF54695">
    <property type="entry name" value="POZ domain"/>
    <property type="match status" value="1"/>
</dbReference>
<dbReference type="PROSITE" id="PS50097">
    <property type="entry name" value="BTB"/>
    <property type="match status" value="1"/>
</dbReference>
<reference key="1">
    <citation type="journal article" date="2013" name="Nature">
        <title>The zebrafish reference genome sequence and its relationship to the human genome.</title>
        <authorList>
            <person name="Howe K."/>
            <person name="Clark M.D."/>
            <person name="Torroja C.F."/>
            <person name="Torrance J."/>
            <person name="Berthelot C."/>
            <person name="Muffato M."/>
            <person name="Collins J.E."/>
            <person name="Humphray S."/>
            <person name="McLaren K."/>
            <person name="Matthews L."/>
            <person name="McLaren S."/>
            <person name="Sealy I."/>
            <person name="Caccamo M."/>
            <person name="Churcher C."/>
            <person name="Scott C."/>
            <person name="Barrett J.C."/>
            <person name="Koch R."/>
            <person name="Rauch G.J."/>
            <person name="White S."/>
            <person name="Chow W."/>
            <person name="Kilian B."/>
            <person name="Quintais L.T."/>
            <person name="Guerra-Assuncao J.A."/>
            <person name="Zhou Y."/>
            <person name="Gu Y."/>
            <person name="Yen J."/>
            <person name="Vogel J.H."/>
            <person name="Eyre T."/>
            <person name="Redmond S."/>
            <person name="Banerjee R."/>
            <person name="Chi J."/>
            <person name="Fu B."/>
            <person name="Langley E."/>
            <person name="Maguire S.F."/>
            <person name="Laird G.K."/>
            <person name="Lloyd D."/>
            <person name="Kenyon E."/>
            <person name="Donaldson S."/>
            <person name="Sehra H."/>
            <person name="Almeida-King J."/>
            <person name="Loveland J."/>
            <person name="Trevanion S."/>
            <person name="Jones M."/>
            <person name="Quail M."/>
            <person name="Willey D."/>
            <person name="Hunt A."/>
            <person name="Burton J."/>
            <person name="Sims S."/>
            <person name="McLay K."/>
            <person name="Plumb B."/>
            <person name="Davis J."/>
            <person name="Clee C."/>
            <person name="Oliver K."/>
            <person name="Clark R."/>
            <person name="Riddle C."/>
            <person name="Elliot D."/>
            <person name="Threadgold G."/>
            <person name="Harden G."/>
            <person name="Ware D."/>
            <person name="Begum S."/>
            <person name="Mortimore B."/>
            <person name="Kerry G."/>
            <person name="Heath P."/>
            <person name="Phillimore B."/>
            <person name="Tracey A."/>
            <person name="Corby N."/>
            <person name="Dunn M."/>
            <person name="Johnson C."/>
            <person name="Wood J."/>
            <person name="Clark S."/>
            <person name="Pelan S."/>
            <person name="Griffiths G."/>
            <person name="Smith M."/>
            <person name="Glithero R."/>
            <person name="Howden P."/>
            <person name="Barker N."/>
            <person name="Lloyd C."/>
            <person name="Stevens C."/>
            <person name="Harley J."/>
            <person name="Holt K."/>
            <person name="Panagiotidis G."/>
            <person name="Lovell J."/>
            <person name="Beasley H."/>
            <person name="Henderson C."/>
            <person name="Gordon D."/>
            <person name="Auger K."/>
            <person name="Wright D."/>
            <person name="Collins J."/>
            <person name="Raisen C."/>
            <person name="Dyer L."/>
            <person name="Leung K."/>
            <person name="Robertson L."/>
            <person name="Ambridge K."/>
            <person name="Leongamornlert D."/>
            <person name="McGuire S."/>
            <person name="Gilderthorp R."/>
            <person name="Griffiths C."/>
            <person name="Manthravadi D."/>
            <person name="Nichol S."/>
            <person name="Barker G."/>
            <person name="Whitehead S."/>
            <person name="Kay M."/>
            <person name="Brown J."/>
            <person name="Murnane C."/>
            <person name="Gray E."/>
            <person name="Humphries M."/>
            <person name="Sycamore N."/>
            <person name="Barker D."/>
            <person name="Saunders D."/>
            <person name="Wallis J."/>
            <person name="Babbage A."/>
            <person name="Hammond S."/>
            <person name="Mashreghi-Mohammadi M."/>
            <person name="Barr L."/>
            <person name="Martin S."/>
            <person name="Wray P."/>
            <person name="Ellington A."/>
            <person name="Matthews N."/>
            <person name="Ellwood M."/>
            <person name="Woodmansey R."/>
            <person name="Clark G."/>
            <person name="Cooper J."/>
            <person name="Tromans A."/>
            <person name="Grafham D."/>
            <person name="Skuce C."/>
            <person name="Pandian R."/>
            <person name="Andrews R."/>
            <person name="Harrison E."/>
            <person name="Kimberley A."/>
            <person name="Garnett J."/>
            <person name="Fosker N."/>
            <person name="Hall R."/>
            <person name="Garner P."/>
            <person name="Kelly D."/>
            <person name="Bird C."/>
            <person name="Palmer S."/>
            <person name="Gehring I."/>
            <person name="Berger A."/>
            <person name="Dooley C.M."/>
            <person name="Ersan-Urun Z."/>
            <person name="Eser C."/>
            <person name="Geiger H."/>
            <person name="Geisler M."/>
            <person name="Karotki L."/>
            <person name="Kirn A."/>
            <person name="Konantz J."/>
            <person name="Konantz M."/>
            <person name="Oberlander M."/>
            <person name="Rudolph-Geiger S."/>
            <person name="Teucke M."/>
            <person name="Lanz C."/>
            <person name="Raddatz G."/>
            <person name="Osoegawa K."/>
            <person name="Zhu B."/>
            <person name="Rapp A."/>
            <person name="Widaa S."/>
            <person name="Langford C."/>
            <person name="Yang F."/>
            <person name="Schuster S.C."/>
            <person name="Carter N.P."/>
            <person name="Harrow J."/>
            <person name="Ning Z."/>
            <person name="Herrero J."/>
            <person name="Searle S.M."/>
            <person name="Enright A."/>
            <person name="Geisler R."/>
            <person name="Plasterk R.H."/>
            <person name="Lee C."/>
            <person name="Westerfield M."/>
            <person name="de Jong P.J."/>
            <person name="Zon L.I."/>
            <person name="Postlethwait J.H."/>
            <person name="Nusslein-Volhard C."/>
            <person name="Hubbard T.J."/>
            <person name="Roest Crollius H."/>
            <person name="Rogers J."/>
            <person name="Stemple D.L."/>
        </authorList>
    </citation>
    <scope>NUCLEOTIDE SEQUENCE [LARGE SCALE GENOMIC DNA]</scope>
    <source>
        <strain>Tuebingen</strain>
    </source>
</reference>
<feature type="chain" id="PRO_0000242690" description="Kelch-like protein 26">
    <location>
        <begin position="1"/>
        <end position="605"/>
    </location>
</feature>
<feature type="domain" description="BTB" evidence="2">
    <location>
        <begin position="53"/>
        <end position="120"/>
    </location>
</feature>
<feature type="domain" description="BACK">
    <location>
        <begin position="155"/>
        <end position="256"/>
    </location>
</feature>
<feature type="repeat" description="Kelch 1">
    <location>
        <begin position="300"/>
        <end position="351"/>
    </location>
</feature>
<feature type="repeat" description="Kelch 2">
    <location>
        <begin position="352"/>
        <end position="403"/>
    </location>
</feature>
<feature type="repeat" description="Kelch 3">
    <location>
        <begin position="404"/>
        <end position="450"/>
    </location>
</feature>
<feature type="repeat" description="Kelch 4">
    <location>
        <begin position="452"/>
        <end position="498"/>
    </location>
</feature>
<feature type="repeat" description="Kelch 5">
    <location>
        <begin position="499"/>
        <end position="549"/>
    </location>
</feature>
<feature type="repeat" description="Kelch 6">
    <location>
        <begin position="551"/>
        <end position="598"/>
    </location>
</feature>
<comment type="function">
    <text evidence="1">May play a role in endo(sarco)plasmic reticulum (ER/SR) mitochondrial signaling (By similarity). May be part of the ubiquitin-proteasome system (UPS) and affect ubiquitination and degradation of target substrates (By similarity).</text>
</comment>
<organism>
    <name type="scientific">Danio rerio</name>
    <name type="common">Zebrafish</name>
    <name type="synonym">Brachydanio rerio</name>
    <dbReference type="NCBI Taxonomy" id="7955"/>
    <lineage>
        <taxon>Eukaryota</taxon>
        <taxon>Metazoa</taxon>
        <taxon>Chordata</taxon>
        <taxon>Craniata</taxon>
        <taxon>Vertebrata</taxon>
        <taxon>Euteleostomi</taxon>
        <taxon>Actinopterygii</taxon>
        <taxon>Neopterygii</taxon>
        <taxon>Teleostei</taxon>
        <taxon>Ostariophysi</taxon>
        <taxon>Cypriniformes</taxon>
        <taxon>Danionidae</taxon>
        <taxon>Danioninae</taxon>
        <taxon>Danio</taxon>
    </lineage>
</organism>